<feature type="chain" id="PRO_0000215256" description="Uncharacterized protein MPN_509">
    <location>
        <begin position="1"/>
        <end position="427"/>
    </location>
</feature>
<gene>
    <name type="ordered locus">MPN_509</name>
    <name type="ORF">MP333</name>
    <name type="ORF">P02_orf427</name>
</gene>
<dbReference type="EMBL" id="U00089">
    <property type="protein sequence ID" value="AAB95981.1"/>
    <property type="molecule type" value="Genomic_DNA"/>
</dbReference>
<dbReference type="PIR" id="S73659">
    <property type="entry name" value="S73659"/>
</dbReference>
<dbReference type="IntAct" id="P75277">
    <property type="interactions" value="2"/>
</dbReference>
<dbReference type="EnsemblBacteria" id="AAB95981">
    <property type="protein sequence ID" value="AAB95981"/>
    <property type="gene ID" value="MPN_509"/>
</dbReference>
<dbReference type="KEGG" id="mpn:MPN_509"/>
<dbReference type="HOGENOM" id="CLU_029253_0_0_14"/>
<dbReference type="Proteomes" id="UP000000808">
    <property type="component" value="Chromosome"/>
</dbReference>
<dbReference type="InterPro" id="IPR004306">
    <property type="entry name" value="DUF237"/>
</dbReference>
<dbReference type="InterPro" id="IPR004319">
    <property type="entry name" value="DUF240"/>
</dbReference>
<dbReference type="Pfam" id="PF03072">
    <property type="entry name" value="DUF237"/>
    <property type="match status" value="1"/>
</dbReference>
<dbReference type="Pfam" id="PF03086">
    <property type="entry name" value="DUF240"/>
    <property type="match status" value="1"/>
</dbReference>
<reference key="1">
    <citation type="journal article" date="1996" name="Nucleic Acids Res.">
        <title>Complete sequence analysis of the genome of the bacterium Mycoplasma pneumoniae.</title>
        <authorList>
            <person name="Himmelreich R."/>
            <person name="Hilbert H."/>
            <person name="Plagens H."/>
            <person name="Pirkl E."/>
            <person name="Li B.-C."/>
            <person name="Herrmann R."/>
        </authorList>
    </citation>
    <scope>NUCLEOTIDE SEQUENCE [LARGE SCALE GENOMIC DNA]</scope>
    <source>
        <strain>ATCC 29342 / M129 / Subtype 1</strain>
    </source>
</reference>
<accession>P75277</accession>
<evidence type="ECO:0000305" key="1"/>
<proteinExistence type="inferred from homology"/>
<keyword id="KW-1185">Reference proteome</keyword>
<protein>
    <recommendedName>
        <fullName>Uncharacterized protein MPN_509</fullName>
    </recommendedName>
</protein>
<comment type="similarity">
    <text evidence="1">Belongs to the MG032/MG096/MG288 family.</text>
</comment>
<sequence>MKFHTVYVGKNTKIDLDFALQAQTNNFSSLEELRESFTNSGQTLSTQLFWKPVIDKLITDEGNDLTTIARTAIGENLFDLKVNLTDSVIDGTVLTKARKSFEERILNPFIEQRKEAKRIHDEEQARLERERKQLEEELKGKEKKVQELIREKTRFLSSFNNVKSFKDYWKGKGKNVEIKSQLIEVLKLAFKTDRNRTFIFLTDAFRNAVDWYYNAKKDDQDSKKKAFGDVGIELPKLGVDGIFIPNWLRWELKHRANLKLNLQSVTTKDIHNDINGWGVPKQIFWNEAKNGIEFRQTYPFKYAFQIRMKYTGDYGLKGIYWTLANWGLGGIPPEWKGEMELVLNVDGQLADWITSKKDYPGTLFQFRDDKLLFTLHITQWINVQDQRFKGLLKKQQLDVLEPWGGDIKVPVVDLASYLHFLILADKS</sequence>
<organism>
    <name type="scientific">Mycoplasma pneumoniae (strain ATCC 29342 / M129 / Subtype 1)</name>
    <name type="common">Mycoplasmoides pneumoniae</name>
    <dbReference type="NCBI Taxonomy" id="272634"/>
    <lineage>
        <taxon>Bacteria</taxon>
        <taxon>Bacillati</taxon>
        <taxon>Mycoplasmatota</taxon>
        <taxon>Mycoplasmoidales</taxon>
        <taxon>Mycoplasmoidaceae</taxon>
        <taxon>Mycoplasmoides</taxon>
    </lineage>
</organism>
<name>Y509_MYCPN</name>